<name>FTSB_BUCAI</name>
<gene>
    <name evidence="1" type="primary">ftsB</name>
    <name type="ordered locus">BU421</name>
</gene>
<dbReference type="EMBL" id="BA000003">
    <property type="protein sequence ID" value="BAB13119.1"/>
    <property type="molecule type" value="Genomic_DNA"/>
</dbReference>
<dbReference type="RefSeq" id="NP_240233.1">
    <property type="nucleotide sequence ID" value="NC_002528.1"/>
</dbReference>
<dbReference type="RefSeq" id="WP_010896107.1">
    <property type="nucleotide sequence ID" value="NC_002528.1"/>
</dbReference>
<dbReference type="SMR" id="P57496"/>
<dbReference type="STRING" id="563178.BUAP5A_414"/>
<dbReference type="EnsemblBacteria" id="BAB13119">
    <property type="protein sequence ID" value="BAB13119"/>
    <property type="gene ID" value="BAB13119"/>
</dbReference>
<dbReference type="KEGG" id="buc:BU421"/>
<dbReference type="PATRIC" id="fig|107806.10.peg.430"/>
<dbReference type="eggNOG" id="COG2919">
    <property type="taxonomic scope" value="Bacteria"/>
</dbReference>
<dbReference type="HOGENOM" id="CLU_134863_5_2_6"/>
<dbReference type="Proteomes" id="UP000001806">
    <property type="component" value="Chromosome"/>
</dbReference>
<dbReference type="GO" id="GO:0032153">
    <property type="term" value="C:cell division site"/>
    <property type="evidence" value="ECO:0007669"/>
    <property type="project" value="UniProtKB-UniRule"/>
</dbReference>
<dbReference type="GO" id="GO:0030428">
    <property type="term" value="C:cell septum"/>
    <property type="evidence" value="ECO:0007669"/>
    <property type="project" value="TreeGrafter"/>
</dbReference>
<dbReference type="GO" id="GO:0005886">
    <property type="term" value="C:plasma membrane"/>
    <property type="evidence" value="ECO:0007669"/>
    <property type="project" value="UniProtKB-SubCell"/>
</dbReference>
<dbReference type="GO" id="GO:0043093">
    <property type="term" value="P:FtsZ-dependent cytokinesis"/>
    <property type="evidence" value="ECO:0007669"/>
    <property type="project" value="UniProtKB-UniRule"/>
</dbReference>
<dbReference type="HAMAP" id="MF_00599">
    <property type="entry name" value="FtsB"/>
    <property type="match status" value="1"/>
</dbReference>
<dbReference type="InterPro" id="IPR023081">
    <property type="entry name" value="Cell_div_FtsB"/>
</dbReference>
<dbReference type="PANTHER" id="PTHR37485">
    <property type="entry name" value="CELL DIVISION PROTEIN FTSB"/>
    <property type="match status" value="1"/>
</dbReference>
<dbReference type="PANTHER" id="PTHR37485:SF1">
    <property type="entry name" value="CELL DIVISION PROTEIN FTSB"/>
    <property type="match status" value="1"/>
</dbReference>
<sequence>MKILKIFLLSLLFWLQYSLWFGKNGVLDFIKIYRRVTIEKKNNEYLDMRNNQIILEIENFNNHINKDKKKT</sequence>
<feature type="chain" id="PRO_0000214439" description="Cell division protein FtsB">
    <location>
        <begin position="1"/>
        <end position="71"/>
    </location>
</feature>
<feature type="topological domain" description="Cytoplasmic" evidence="1">
    <location>
        <begin position="1"/>
        <end position="3"/>
    </location>
</feature>
<feature type="transmembrane region" description="Helical" evidence="1">
    <location>
        <begin position="4"/>
        <end position="21"/>
    </location>
</feature>
<feature type="topological domain" description="Extracellular" evidence="1">
    <location>
        <begin position="22"/>
        <end position="71"/>
    </location>
</feature>
<organism>
    <name type="scientific">Buchnera aphidicola subsp. Acyrthosiphon pisum (strain APS)</name>
    <name type="common">Acyrthosiphon pisum symbiotic bacterium</name>
    <dbReference type="NCBI Taxonomy" id="107806"/>
    <lineage>
        <taxon>Bacteria</taxon>
        <taxon>Pseudomonadati</taxon>
        <taxon>Pseudomonadota</taxon>
        <taxon>Gammaproteobacteria</taxon>
        <taxon>Enterobacterales</taxon>
        <taxon>Erwiniaceae</taxon>
        <taxon>Buchnera</taxon>
    </lineage>
</organism>
<reference key="1">
    <citation type="journal article" date="2000" name="Nature">
        <title>Genome sequence of the endocellular bacterial symbiont of aphids Buchnera sp. APS.</title>
        <authorList>
            <person name="Shigenobu S."/>
            <person name="Watanabe H."/>
            <person name="Hattori M."/>
            <person name="Sakaki Y."/>
            <person name="Ishikawa H."/>
        </authorList>
    </citation>
    <scope>NUCLEOTIDE SEQUENCE [LARGE SCALE GENOMIC DNA]</scope>
    <source>
        <strain>APS</strain>
    </source>
</reference>
<proteinExistence type="inferred from homology"/>
<comment type="function">
    <text evidence="1">Essential cell division protein. May link together the upstream cell division proteins, which are predominantly cytoplasmic, with the downstream cell division proteins, which are predominantly extracellular.</text>
</comment>
<comment type="subcellular location">
    <subcellularLocation>
        <location>Cell membrane</location>
        <topology>Single-pass type II membrane protein</topology>
    </subcellularLocation>
    <text evidence="1">Localizes to the division septum.</text>
</comment>
<comment type="similarity">
    <text evidence="1">Belongs to the FtsB family.</text>
</comment>
<evidence type="ECO:0000255" key="1">
    <source>
        <dbReference type="HAMAP-Rule" id="MF_00599"/>
    </source>
</evidence>
<protein>
    <recommendedName>
        <fullName evidence="1">Cell division protein FtsB</fullName>
    </recommendedName>
</protein>
<keyword id="KW-0131">Cell cycle</keyword>
<keyword id="KW-0132">Cell division</keyword>
<keyword id="KW-1003">Cell membrane</keyword>
<keyword id="KW-0472">Membrane</keyword>
<keyword id="KW-1185">Reference proteome</keyword>
<keyword id="KW-0812">Transmembrane</keyword>
<keyword id="KW-1133">Transmembrane helix</keyword>
<accession>P57496</accession>